<evidence type="ECO:0000250" key="1">
    <source>
        <dbReference type="UniProtKB" id="Q9D4H9"/>
    </source>
</evidence>
<evidence type="ECO:0000255" key="2"/>
<evidence type="ECO:0000255" key="3">
    <source>
        <dbReference type="PROSITE-ProRule" id="PRU00146"/>
    </source>
</evidence>
<evidence type="ECO:0000255" key="4">
    <source>
        <dbReference type="PROSITE-ProRule" id="PRU01146"/>
    </source>
</evidence>
<evidence type="ECO:0000256" key="5">
    <source>
        <dbReference type="SAM" id="MobiDB-lite"/>
    </source>
</evidence>
<evidence type="ECO:0000269" key="6">
    <source>
    </source>
</evidence>
<evidence type="ECO:0000312" key="7">
    <source>
        <dbReference type="Proteomes" id="UP000000437"/>
    </source>
</evidence>
<evidence type="ECO:0000312" key="8">
    <source>
        <dbReference type="ZFIN" id="ZDB-GENE-030131-1796"/>
    </source>
</evidence>
<evidence type="ECO:0007744" key="9">
    <source>
        <dbReference type="PDB" id="7D86"/>
    </source>
</evidence>
<evidence type="ECO:0007744" key="10">
    <source>
        <dbReference type="PDB" id="7D87"/>
    </source>
</evidence>
<evidence type="ECO:0007744" key="11">
    <source>
        <dbReference type="PDB" id="7D8A"/>
    </source>
</evidence>
<evidence type="ECO:0007829" key="12">
    <source>
        <dbReference type="PDB" id="7D86"/>
    </source>
</evidence>
<evidence type="ECO:0007829" key="13">
    <source>
        <dbReference type="PDB" id="7D8A"/>
    </source>
</evidence>
<organism evidence="7">
    <name type="scientific">Danio rerio</name>
    <name type="common">Zebrafish</name>
    <name type="synonym">Brachydanio rerio</name>
    <dbReference type="NCBI Taxonomy" id="7955"/>
    <lineage>
        <taxon>Eukaryota</taxon>
        <taxon>Metazoa</taxon>
        <taxon>Chordata</taxon>
        <taxon>Craniata</taxon>
        <taxon>Vertebrata</taxon>
        <taxon>Euteleostomi</taxon>
        <taxon>Actinopterygii</taxon>
        <taxon>Neopterygii</taxon>
        <taxon>Teleostei</taxon>
        <taxon>Ostariophysi</taxon>
        <taxon>Cypriniformes</taxon>
        <taxon>Danionidae</taxon>
        <taxon>Danioninae</taxon>
        <taxon>Danio</taxon>
    </lineage>
</organism>
<gene>
    <name evidence="8" type="primary">phf14</name>
</gene>
<feature type="chain" id="PRO_0000456615" description="PHD finger protein 14">
    <location>
        <begin position="1"/>
        <end position="914"/>
    </location>
</feature>
<feature type="zinc finger region" description="PHD-type 1" evidence="3">
    <location>
        <begin position="285"/>
        <end position="346"/>
    </location>
</feature>
<feature type="zinc finger region" description="C2HC pre-PHD-type" evidence="4">
    <location>
        <begin position="348"/>
        <end position="381"/>
    </location>
</feature>
<feature type="zinc finger region" description="PHD-type 2" evidence="4">
    <location>
        <begin position="405"/>
        <end position="465"/>
    </location>
</feature>
<feature type="zinc finger region" description="PHD-type 3" evidence="3">
    <location>
        <begin position="692"/>
        <end position="746"/>
    </location>
</feature>
<feature type="zinc finger region" description="PHD-type 4" evidence="3">
    <location>
        <begin position="835"/>
        <end position="888"/>
    </location>
</feature>
<feature type="region of interest" description="Disordered" evidence="5">
    <location>
        <begin position="19"/>
        <end position="276"/>
    </location>
</feature>
<feature type="region of interest" description="Disordered" evidence="5">
    <location>
        <begin position="777"/>
        <end position="838"/>
    </location>
</feature>
<feature type="region of interest" description="Disordered" evidence="5">
    <location>
        <begin position="887"/>
        <end position="914"/>
    </location>
</feature>
<feature type="coiled-coil region" evidence="2">
    <location>
        <begin position="596"/>
        <end position="644"/>
    </location>
</feature>
<feature type="compositionally biased region" description="Low complexity" evidence="5">
    <location>
        <begin position="53"/>
        <end position="68"/>
    </location>
</feature>
<feature type="compositionally biased region" description="Basic and acidic residues" evidence="5">
    <location>
        <begin position="90"/>
        <end position="102"/>
    </location>
</feature>
<feature type="compositionally biased region" description="Acidic residues" evidence="5">
    <location>
        <begin position="155"/>
        <end position="168"/>
    </location>
</feature>
<feature type="compositionally biased region" description="Acidic residues" evidence="5">
    <location>
        <begin position="191"/>
        <end position="233"/>
    </location>
</feature>
<feature type="compositionally biased region" description="Basic residues" evidence="5">
    <location>
        <begin position="792"/>
        <end position="802"/>
    </location>
</feature>
<feature type="compositionally biased region" description="Basic and acidic residues" evidence="5">
    <location>
        <begin position="803"/>
        <end position="817"/>
    </location>
</feature>
<feature type="compositionally biased region" description="Acidic residues" evidence="5">
    <location>
        <begin position="894"/>
        <end position="914"/>
    </location>
</feature>
<feature type="binding site" evidence="3 6 9 10 11">
    <location>
        <position position="288"/>
    </location>
    <ligand>
        <name>Zn(2+)</name>
        <dbReference type="ChEBI" id="CHEBI:29105"/>
        <label>1</label>
    </ligand>
</feature>
<feature type="binding site" evidence="3 6 9 10 11">
    <location>
        <position position="291"/>
    </location>
    <ligand>
        <name>Zn(2+)</name>
        <dbReference type="ChEBI" id="CHEBI:29105"/>
        <label>1</label>
    </ligand>
</feature>
<feature type="binding site" evidence="3 6 9 10 11">
    <location>
        <position position="305"/>
    </location>
    <ligand>
        <name>Zn(2+)</name>
        <dbReference type="ChEBI" id="CHEBI:29105"/>
        <label>2</label>
    </ligand>
</feature>
<feature type="binding site" evidence="3 6 9 10 11">
    <location>
        <position position="308"/>
    </location>
    <ligand>
        <name>Zn(2+)</name>
        <dbReference type="ChEBI" id="CHEBI:29105"/>
        <label>2</label>
    </ligand>
</feature>
<feature type="binding site" evidence="3 6 9 10 11">
    <location>
        <position position="313"/>
    </location>
    <ligand>
        <name>Zn(2+)</name>
        <dbReference type="ChEBI" id="CHEBI:29105"/>
        <label>1</label>
    </ligand>
</feature>
<feature type="binding site" evidence="3 6 9 10 11">
    <location>
        <position position="316"/>
    </location>
    <ligand>
        <name>Zn(2+)</name>
        <dbReference type="ChEBI" id="CHEBI:29105"/>
        <label>1</label>
    </ligand>
</feature>
<feature type="binding site" evidence="3 6 9 10 11">
    <location>
        <position position="340"/>
    </location>
    <ligand>
        <name>Zn(2+)</name>
        <dbReference type="ChEBI" id="CHEBI:29105"/>
        <label>2</label>
    </ligand>
</feature>
<feature type="binding site" evidence="3 6 9 10 11">
    <location>
        <position position="343"/>
    </location>
    <ligand>
        <name>Zn(2+)</name>
        <dbReference type="ChEBI" id="CHEBI:29105"/>
        <label>2</label>
    </ligand>
</feature>
<feature type="binding site" evidence="6 9 10 11">
    <location>
        <position position="351"/>
    </location>
    <ligand>
        <name>Zn(2+)</name>
        <dbReference type="ChEBI" id="CHEBI:29105"/>
        <label>3</label>
    </ligand>
</feature>
<feature type="binding site" evidence="6 9 10 11">
    <location>
        <position position="354"/>
    </location>
    <ligand>
        <name>Zn(2+)</name>
        <dbReference type="ChEBI" id="CHEBI:29105"/>
        <label>3</label>
    </ligand>
</feature>
<feature type="binding site" evidence="6 9 10 11">
    <location>
        <position position="371"/>
    </location>
    <ligand>
        <name>Zn(2+)</name>
        <dbReference type="ChEBI" id="CHEBI:29105"/>
        <label>3</label>
    </ligand>
</feature>
<feature type="binding site" evidence="6 9 10 11">
    <location>
        <position position="374"/>
    </location>
    <ligand>
        <name>Zn(2+)</name>
        <dbReference type="ChEBI" id="CHEBI:29105"/>
        <label>3</label>
    </ligand>
</feature>
<feature type="binding site" evidence="6 9 10 11">
    <location>
        <position position="407"/>
    </location>
    <ligand>
        <name>Zn(2+)</name>
        <dbReference type="ChEBI" id="CHEBI:29105"/>
        <label>4</label>
    </ligand>
</feature>
<feature type="binding site" evidence="6 9 10 11">
    <location>
        <position position="410"/>
    </location>
    <ligand>
        <name>Zn(2+)</name>
        <dbReference type="ChEBI" id="CHEBI:29105"/>
        <label>4</label>
    </ligand>
</feature>
<feature type="binding site" evidence="6 9 10 11">
    <location>
        <position position="424"/>
    </location>
    <ligand>
        <name>Zn(2+)</name>
        <dbReference type="ChEBI" id="CHEBI:29105"/>
        <label>5</label>
    </ligand>
</feature>
<feature type="binding site" evidence="6 9 10 11">
    <location>
        <position position="429"/>
    </location>
    <ligand>
        <name>Zn(2+)</name>
        <dbReference type="ChEBI" id="CHEBI:29105"/>
        <label>5</label>
    </ligand>
</feature>
<feature type="binding site" evidence="6 9 10 11">
    <location>
        <position position="434"/>
    </location>
    <ligand>
        <name>Zn(2+)</name>
        <dbReference type="ChEBI" id="CHEBI:29105"/>
        <label>4</label>
    </ligand>
</feature>
<feature type="binding site" evidence="6 9 10 11">
    <location>
        <position position="437"/>
    </location>
    <ligand>
        <name>Zn(2+)</name>
        <dbReference type="ChEBI" id="CHEBI:29105"/>
        <label>4</label>
    </ligand>
</feature>
<feature type="binding site" evidence="6 9 10 11">
    <location>
        <position position="461"/>
    </location>
    <ligand>
        <name>Zn(2+)</name>
        <dbReference type="ChEBI" id="CHEBI:29105"/>
        <label>5</label>
    </ligand>
</feature>
<feature type="binding site" evidence="6 9 10 11">
    <location>
        <position position="464"/>
    </location>
    <ligand>
        <name>Zn(2+)</name>
        <dbReference type="ChEBI" id="CHEBI:29105"/>
        <label>5</label>
    </ligand>
</feature>
<feature type="binding site" evidence="3">
    <location>
        <position position="695"/>
    </location>
    <ligand>
        <name>Zn(2+)</name>
        <dbReference type="ChEBI" id="CHEBI:29105"/>
        <label>6</label>
    </ligand>
</feature>
<feature type="binding site" evidence="3">
    <location>
        <position position="698"/>
    </location>
    <ligand>
        <name>Zn(2+)</name>
        <dbReference type="ChEBI" id="CHEBI:29105"/>
        <label>6</label>
    </ligand>
</feature>
<feature type="binding site" evidence="3">
    <location>
        <position position="710"/>
    </location>
    <ligand>
        <name>Zn(2+)</name>
        <dbReference type="ChEBI" id="CHEBI:29105"/>
        <label>7</label>
    </ligand>
</feature>
<feature type="binding site" evidence="3">
    <location>
        <position position="713"/>
    </location>
    <ligand>
        <name>Zn(2+)</name>
        <dbReference type="ChEBI" id="CHEBI:29105"/>
        <label>7</label>
    </ligand>
</feature>
<feature type="binding site" evidence="3">
    <location>
        <position position="718"/>
    </location>
    <ligand>
        <name>Zn(2+)</name>
        <dbReference type="ChEBI" id="CHEBI:29105"/>
        <label>6</label>
    </ligand>
</feature>
<feature type="binding site" evidence="3">
    <location>
        <position position="721"/>
    </location>
    <ligand>
        <name>Zn(2+)</name>
        <dbReference type="ChEBI" id="CHEBI:29105"/>
        <label>6</label>
    </ligand>
</feature>
<feature type="binding site" evidence="3">
    <location>
        <position position="740"/>
    </location>
    <ligand>
        <name>Zn(2+)</name>
        <dbReference type="ChEBI" id="CHEBI:29105"/>
        <label>7</label>
    </ligand>
</feature>
<feature type="binding site" evidence="3">
    <location>
        <position position="743"/>
    </location>
    <ligand>
        <name>Zn(2+)</name>
        <dbReference type="ChEBI" id="CHEBI:29105"/>
        <label>7</label>
    </ligand>
</feature>
<feature type="binding site" evidence="3">
    <location>
        <position position="838"/>
    </location>
    <ligand>
        <name>Zn(2+)</name>
        <dbReference type="ChEBI" id="CHEBI:29105"/>
        <label>8</label>
    </ligand>
</feature>
<feature type="binding site" evidence="3">
    <location>
        <position position="841"/>
    </location>
    <ligand>
        <name>Zn(2+)</name>
        <dbReference type="ChEBI" id="CHEBI:29105"/>
        <label>8</label>
    </ligand>
</feature>
<feature type="binding site" evidence="3">
    <location>
        <position position="853"/>
    </location>
    <ligand>
        <name>Zn(2+)</name>
        <dbReference type="ChEBI" id="CHEBI:29105"/>
        <label>9</label>
    </ligand>
</feature>
<feature type="binding site" evidence="3">
    <location>
        <position position="856"/>
    </location>
    <ligand>
        <name>Zn(2+)</name>
        <dbReference type="ChEBI" id="CHEBI:29105"/>
        <label>9</label>
    </ligand>
</feature>
<feature type="binding site" evidence="3">
    <location>
        <position position="861"/>
    </location>
    <ligand>
        <name>Zn(2+)</name>
        <dbReference type="ChEBI" id="CHEBI:29105"/>
        <label>8</label>
    </ligand>
</feature>
<feature type="binding site" evidence="3">
    <location>
        <position position="864"/>
    </location>
    <ligand>
        <name>Zn(2+)</name>
        <dbReference type="ChEBI" id="CHEBI:29105"/>
        <label>8</label>
    </ligand>
</feature>
<feature type="binding site" evidence="3">
    <location>
        <position position="882"/>
    </location>
    <ligand>
        <name>Zn(2+)</name>
        <dbReference type="ChEBI" id="CHEBI:29105"/>
        <label>9</label>
    </ligand>
</feature>
<feature type="binding site" evidence="3">
    <location>
        <position position="885"/>
    </location>
    <ligand>
        <name>Zn(2+)</name>
        <dbReference type="ChEBI" id="CHEBI:29105"/>
        <label>9</label>
    </ligand>
</feature>
<feature type="mutagenesis site" description="28-fold decrease in affinity for histone H3." evidence="6">
    <original>E</original>
    <variation>A</variation>
    <location>
        <position position="301"/>
    </location>
</feature>
<feature type="mutagenesis site" description="Loss of binding to histone H3." evidence="6">
    <original>D</original>
    <variation>A</variation>
    <location>
        <position position="306"/>
    </location>
</feature>
<feature type="mutagenesis site" description="Loss of binding to histone H3." evidence="6">
    <original>E</original>
    <variation>R</variation>
    <location>
        <position position="314"/>
    </location>
</feature>
<feature type="mutagenesis site" description="Loss of binding to histone H3." evidence="6">
    <original>ESDSIMSSASENST</original>
    <variation>SS</variation>
    <location>
        <begin position="322"/>
        <end position="335"/>
    </location>
</feature>
<feature type="mutagenesis site" description="Reduced binding to histone H3; when associated with M-386." evidence="6">
    <original>V</original>
    <variation>M</variation>
    <location>
        <position position="378"/>
    </location>
</feature>
<feature type="mutagenesis site" description="Reduced binding to histone H3. Reduced binding to histone H3; when associated with M-378." evidence="6">
    <original>I</original>
    <variation>M</variation>
    <location>
        <position position="386"/>
    </location>
</feature>
<feature type="turn" evidence="12">
    <location>
        <begin position="289"/>
        <end position="291"/>
    </location>
</feature>
<feature type="strand" evidence="12">
    <location>
        <begin position="298"/>
        <end position="300"/>
    </location>
</feature>
<feature type="strand" evidence="12">
    <location>
        <begin position="302"/>
        <end position="304"/>
    </location>
</feature>
<feature type="turn" evidence="12">
    <location>
        <begin position="306"/>
        <end position="308"/>
    </location>
</feature>
<feature type="strand" evidence="12">
    <location>
        <begin position="311"/>
        <end position="313"/>
    </location>
</feature>
<feature type="turn" evidence="12">
    <location>
        <begin position="314"/>
        <end position="318"/>
    </location>
</feature>
<feature type="turn" evidence="13">
    <location>
        <begin position="326"/>
        <end position="330"/>
    </location>
</feature>
<feature type="strand" evidence="13">
    <location>
        <begin position="333"/>
        <end position="336"/>
    </location>
</feature>
<feature type="helix" evidence="12">
    <location>
        <begin position="341"/>
        <end position="344"/>
    </location>
</feature>
<feature type="strand" evidence="12">
    <location>
        <begin position="361"/>
        <end position="364"/>
    </location>
</feature>
<feature type="strand" evidence="12">
    <location>
        <begin position="369"/>
        <end position="371"/>
    </location>
</feature>
<feature type="helix" evidence="12">
    <location>
        <begin position="372"/>
        <end position="377"/>
    </location>
</feature>
<feature type="helix" evidence="12">
    <location>
        <begin position="383"/>
        <end position="385"/>
    </location>
</feature>
<feature type="turn" evidence="12">
    <location>
        <begin position="386"/>
        <end position="389"/>
    </location>
</feature>
<feature type="helix" evidence="12">
    <location>
        <begin position="396"/>
        <end position="399"/>
    </location>
</feature>
<feature type="turn" evidence="12">
    <location>
        <begin position="400"/>
        <end position="403"/>
    </location>
</feature>
<feature type="helix" evidence="12">
    <location>
        <begin position="413"/>
        <end position="415"/>
    </location>
</feature>
<feature type="helix" evidence="12">
    <location>
        <begin position="435"/>
        <end position="440"/>
    </location>
</feature>
<feature type="strand" evidence="12">
    <location>
        <begin position="444"/>
        <end position="446"/>
    </location>
</feature>
<feature type="helix" evidence="12">
    <location>
        <begin position="449"/>
        <end position="451"/>
    </location>
</feature>
<feature type="strand" evidence="12">
    <location>
        <begin position="457"/>
        <end position="459"/>
    </location>
</feature>
<feature type="turn" evidence="12">
    <location>
        <begin position="462"/>
        <end position="464"/>
    </location>
</feature>
<feature type="helix" evidence="12">
    <location>
        <begin position="467"/>
        <end position="480"/>
    </location>
</feature>
<feature type="helix" evidence="12">
    <location>
        <begin position="481"/>
        <end position="483"/>
    </location>
</feature>
<sequence length="914" mass="102272">MDRGSKRRQVKPLADSLLDALDYDSSDDSDFKVGESSGSEGTGNGSDEEGSKESAAGSESDSDAAAASADEEGIDDLETKDLNQEDDEEEKVKESFSEETSSKETGGSSRSRKKGEKSSDMEPNGSATTEENSAEPKKWNLRRNRPMLDFTTMEELNEMDDYDSEDDNDWRPTQGKKKGKASSGKEKEGSGEEDDDDDDGGSDEEDNEDDNDDDDDDDDEGNDDESSSSDSEEEGKKPKKKAGKNTGAFDEEETNDSHSTSHGKGNEDSLLERPQTWSSQRMEHILICCVCLGDNSEDADEIIQCDNCGVTVHEGCYGVDGESDSIMSSASENSTEPWFCDACKNGVSPSCELCPSQDGIFKETDAGRWVHVVCALYVPGVAFGDIDKLRPVTLTEMNYSKYGAKECSLCEDTRFARTGVCISCDAGMCRSFFHVTCAQREGLLSEAAAEEDIADPFFAYCKQHADRFDRKWKRKNYLALQSYCKVSLQEREKQLTPEAQARITTRLQQYRAKAELSRNTRPQAWVPREKLPRPLTSSASAIRKLMRKAELMGISTDIFPVDTSDISASVDGRRKHKQPALTADFVNYYLERNMRMIQIQDNIVEQKNLKDKLESEQEKLHMEYDKLCESLEDLQNVNGQLRTEGQSIWSMMGGIVGQKLNVPAVLKAPKERKPSKKEGGSPGKSSSLPAMLYSCGICKKNQDQHLLLLCDTCKLHYHLGCLDPPLTRMPKKTKNSYWQCSECDQASSDEADIAMETLPDGTKRSRRQIKGPIKFIPQEMSPEPKKPQVRGTRTRGQKRKRMSICEEEKMEEPLPRERRQRQSTLQKKPKADDTRTECTTCKGPGDNENLVRCDECRLCYHFGCLDPPLKKSPKQTGYGWICQECDTSSSKEEEAQEVEEESVNEETAEQEIPD</sequence>
<accession>A0A286Y9D1</accession>
<keyword id="KW-0002">3D-structure</keyword>
<keyword id="KW-0175">Coiled coil</keyword>
<keyword id="KW-0479">Metal-binding</keyword>
<keyword id="KW-0539">Nucleus</keyword>
<keyword id="KW-1185">Reference proteome</keyword>
<keyword id="KW-0677">Repeat</keyword>
<keyword id="KW-0804">Transcription</keyword>
<keyword id="KW-0805">Transcription regulation</keyword>
<keyword id="KW-0862">Zinc</keyword>
<keyword id="KW-0863">Zinc-finger</keyword>
<protein>
    <recommendedName>
        <fullName evidence="8">PHD finger protein 14</fullName>
    </recommendedName>
</protein>
<reference evidence="7" key="1">
    <citation type="journal article" date="2013" name="Nature">
        <title>The zebrafish reference genome sequence and its relationship to the human genome.</title>
        <authorList>
            <person name="Howe K."/>
            <person name="Clark M.D."/>
            <person name="Torroja C.F."/>
            <person name="Torrance J."/>
            <person name="Berthelot C."/>
            <person name="Muffato M."/>
            <person name="Collins J.E."/>
            <person name="Humphray S."/>
            <person name="McLaren K."/>
            <person name="Matthews L."/>
            <person name="McLaren S."/>
            <person name="Sealy I."/>
            <person name="Caccamo M."/>
            <person name="Churcher C."/>
            <person name="Scott C."/>
            <person name="Barrett J.C."/>
            <person name="Koch R."/>
            <person name="Rauch G.J."/>
            <person name="White S."/>
            <person name="Chow W."/>
            <person name="Kilian B."/>
            <person name="Quintais L.T."/>
            <person name="Guerra-Assuncao J.A."/>
            <person name="Zhou Y."/>
            <person name="Gu Y."/>
            <person name="Yen J."/>
            <person name="Vogel J.H."/>
            <person name="Eyre T."/>
            <person name="Redmond S."/>
            <person name="Banerjee R."/>
            <person name="Chi J."/>
            <person name="Fu B."/>
            <person name="Langley E."/>
            <person name="Maguire S.F."/>
            <person name="Laird G.K."/>
            <person name="Lloyd D."/>
            <person name="Kenyon E."/>
            <person name="Donaldson S."/>
            <person name="Sehra H."/>
            <person name="Almeida-King J."/>
            <person name="Loveland J."/>
            <person name="Trevanion S."/>
            <person name="Jones M."/>
            <person name="Quail M."/>
            <person name="Willey D."/>
            <person name="Hunt A."/>
            <person name="Burton J."/>
            <person name="Sims S."/>
            <person name="McLay K."/>
            <person name="Plumb B."/>
            <person name="Davis J."/>
            <person name="Clee C."/>
            <person name="Oliver K."/>
            <person name="Clark R."/>
            <person name="Riddle C."/>
            <person name="Elliot D."/>
            <person name="Threadgold G."/>
            <person name="Harden G."/>
            <person name="Ware D."/>
            <person name="Begum S."/>
            <person name="Mortimore B."/>
            <person name="Kerry G."/>
            <person name="Heath P."/>
            <person name="Phillimore B."/>
            <person name="Tracey A."/>
            <person name="Corby N."/>
            <person name="Dunn M."/>
            <person name="Johnson C."/>
            <person name="Wood J."/>
            <person name="Clark S."/>
            <person name="Pelan S."/>
            <person name="Griffiths G."/>
            <person name="Smith M."/>
            <person name="Glithero R."/>
            <person name="Howden P."/>
            <person name="Barker N."/>
            <person name="Lloyd C."/>
            <person name="Stevens C."/>
            <person name="Harley J."/>
            <person name="Holt K."/>
            <person name="Panagiotidis G."/>
            <person name="Lovell J."/>
            <person name="Beasley H."/>
            <person name="Henderson C."/>
            <person name="Gordon D."/>
            <person name="Auger K."/>
            <person name="Wright D."/>
            <person name="Collins J."/>
            <person name="Raisen C."/>
            <person name="Dyer L."/>
            <person name="Leung K."/>
            <person name="Robertson L."/>
            <person name="Ambridge K."/>
            <person name="Leongamornlert D."/>
            <person name="McGuire S."/>
            <person name="Gilderthorp R."/>
            <person name="Griffiths C."/>
            <person name="Manthravadi D."/>
            <person name="Nichol S."/>
            <person name="Barker G."/>
            <person name="Whitehead S."/>
            <person name="Kay M."/>
            <person name="Brown J."/>
            <person name="Murnane C."/>
            <person name="Gray E."/>
            <person name="Humphries M."/>
            <person name="Sycamore N."/>
            <person name="Barker D."/>
            <person name="Saunders D."/>
            <person name="Wallis J."/>
            <person name="Babbage A."/>
            <person name="Hammond S."/>
            <person name="Mashreghi-Mohammadi M."/>
            <person name="Barr L."/>
            <person name="Martin S."/>
            <person name="Wray P."/>
            <person name="Ellington A."/>
            <person name="Matthews N."/>
            <person name="Ellwood M."/>
            <person name="Woodmansey R."/>
            <person name="Clark G."/>
            <person name="Cooper J."/>
            <person name="Tromans A."/>
            <person name="Grafham D."/>
            <person name="Skuce C."/>
            <person name="Pandian R."/>
            <person name="Andrews R."/>
            <person name="Harrison E."/>
            <person name="Kimberley A."/>
            <person name="Garnett J."/>
            <person name="Fosker N."/>
            <person name="Hall R."/>
            <person name="Garner P."/>
            <person name="Kelly D."/>
            <person name="Bird C."/>
            <person name="Palmer S."/>
            <person name="Gehring I."/>
            <person name="Berger A."/>
            <person name="Dooley C.M."/>
            <person name="Ersan-Urun Z."/>
            <person name="Eser C."/>
            <person name="Geiger H."/>
            <person name="Geisler M."/>
            <person name="Karotki L."/>
            <person name="Kirn A."/>
            <person name="Konantz J."/>
            <person name="Konantz M."/>
            <person name="Oberlander M."/>
            <person name="Rudolph-Geiger S."/>
            <person name="Teucke M."/>
            <person name="Lanz C."/>
            <person name="Raddatz G."/>
            <person name="Osoegawa K."/>
            <person name="Zhu B."/>
            <person name="Rapp A."/>
            <person name="Widaa S."/>
            <person name="Langford C."/>
            <person name="Yang F."/>
            <person name="Schuster S.C."/>
            <person name="Carter N.P."/>
            <person name="Harrow J."/>
            <person name="Ning Z."/>
            <person name="Herrero J."/>
            <person name="Searle S.M."/>
            <person name="Enright A."/>
            <person name="Geisler R."/>
            <person name="Plasterk R.H."/>
            <person name="Lee C."/>
            <person name="Westerfield M."/>
            <person name="de Jong P.J."/>
            <person name="Zon L.I."/>
            <person name="Postlethwait J.H."/>
            <person name="Nusslein-Volhard C."/>
            <person name="Hubbard T.J."/>
            <person name="Roest Crollius H."/>
            <person name="Rogers J."/>
            <person name="Stemple D.L."/>
        </authorList>
    </citation>
    <scope>NUCLEOTIDE SEQUENCE [LARGE SCALE GENOMIC DNA]</scope>
    <source>
        <strain evidence="7">Tuebingen</strain>
    </source>
</reference>
<reference evidence="9 10 11" key="2">
    <citation type="journal article" date="2021" name="Nucleic Acids Res.">
        <title>Molecular basis for bipartite recognition of histone H3 by the PZP domain of PHF14.</title>
        <authorList>
            <person name="Zheng S."/>
            <person name="Bi Y."/>
            <person name="Chen H."/>
            <person name="Gong B."/>
            <person name="Jia S."/>
            <person name="Li H."/>
        </authorList>
    </citation>
    <scope>X-RAY CRYSTALLOGRAPHY (1.84 ANGSTROMS) OF 278-487 IN COMPLEX WITH HISTONE H3 AND ZINC</scope>
    <scope>FUNCTION</scope>
    <scope>INTERACTION WITH HISTONE H3</scope>
    <scope>MUTAGENESIS OF GLU-301; ASP-306; GLU-314; 322-GLU--THR-335; VAL-378 AND ILE-386</scope>
    <scope>DOMAIN</scope>
</reference>
<name>PHF14_DANRE</name>
<dbReference type="EMBL" id="BX276085">
    <property type="status" value="NOT_ANNOTATED_CDS"/>
    <property type="molecule type" value="Genomic_DNA"/>
</dbReference>
<dbReference type="EMBL" id="BX530058">
    <property type="status" value="NOT_ANNOTATED_CDS"/>
    <property type="molecule type" value="Genomic_DNA"/>
</dbReference>
<dbReference type="EMBL" id="BX957232">
    <property type="status" value="NOT_ANNOTATED_CDS"/>
    <property type="molecule type" value="Genomic_DNA"/>
</dbReference>
<dbReference type="RefSeq" id="NP_001410702.1">
    <property type="nucleotide sequence ID" value="NM_001423773.1"/>
</dbReference>
<dbReference type="RefSeq" id="XP_005159744.1">
    <property type="nucleotide sequence ID" value="XM_005159687.3"/>
</dbReference>
<dbReference type="PDB" id="7D86">
    <property type="method" value="X-ray"/>
    <property type="resolution" value="1.84 A"/>
    <property type="chains" value="A=278-487"/>
</dbReference>
<dbReference type="PDB" id="7D87">
    <property type="method" value="X-ray"/>
    <property type="resolution" value="2.11 A"/>
    <property type="chains" value="A=278-487"/>
</dbReference>
<dbReference type="PDB" id="7D8A">
    <property type="method" value="X-ray"/>
    <property type="resolution" value="2.00 A"/>
    <property type="chains" value="A=278-487"/>
</dbReference>
<dbReference type="PDBsum" id="7D86"/>
<dbReference type="PDBsum" id="7D87"/>
<dbReference type="PDBsum" id="7D8A"/>
<dbReference type="SMR" id="A0A286Y9D1"/>
<dbReference type="FunCoup" id="A0A286Y9D1">
    <property type="interactions" value="1377"/>
</dbReference>
<dbReference type="STRING" id="7955.ENSDARP00000143778"/>
<dbReference type="Ensembl" id="ENSDART00000177759">
    <property type="protein sequence ID" value="ENSDARP00000143778"/>
    <property type="gene ID" value="ENSDARG00000061458"/>
</dbReference>
<dbReference type="GeneID" id="555505"/>
<dbReference type="AGR" id="ZFIN:ZDB-GENE-030131-1796"/>
<dbReference type="ZFIN" id="ZDB-GENE-030131-1796">
    <property type="gene designation" value="phf14"/>
</dbReference>
<dbReference type="InParanoid" id="A0A286Y9D1"/>
<dbReference type="OMA" id="KCGVAVH"/>
<dbReference type="OrthoDB" id="336088at2759"/>
<dbReference type="PRO" id="PR:A0A286Y9D1"/>
<dbReference type="Proteomes" id="UP000000437">
    <property type="component" value="Chromosome 19"/>
</dbReference>
<dbReference type="Bgee" id="ENSDARG00000061458">
    <property type="expression patterns" value="Expressed in blastula and 29 other cell types or tissues"/>
</dbReference>
<dbReference type="ExpressionAtlas" id="A0A286Y9D1">
    <property type="expression patterns" value="baseline"/>
</dbReference>
<dbReference type="GO" id="GO:0005634">
    <property type="term" value="C:nucleus"/>
    <property type="evidence" value="ECO:0000250"/>
    <property type="project" value="UniProtKB"/>
</dbReference>
<dbReference type="GO" id="GO:0042393">
    <property type="term" value="F:histone binding"/>
    <property type="evidence" value="ECO:0000314"/>
    <property type="project" value="UniProtKB"/>
</dbReference>
<dbReference type="GO" id="GO:0140566">
    <property type="term" value="F:histone reader activity"/>
    <property type="evidence" value="ECO:0000314"/>
    <property type="project" value="UniProtKB"/>
</dbReference>
<dbReference type="GO" id="GO:0008270">
    <property type="term" value="F:zinc ion binding"/>
    <property type="evidence" value="ECO:0000314"/>
    <property type="project" value="UniProtKB"/>
</dbReference>
<dbReference type="GO" id="GO:0048286">
    <property type="term" value="P:lung alveolus development"/>
    <property type="evidence" value="ECO:0000250"/>
    <property type="project" value="UniProtKB"/>
</dbReference>
<dbReference type="GO" id="GO:0010463">
    <property type="term" value="P:mesenchymal cell proliferation"/>
    <property type="evidence" value="ECO:0000250"/>
    <property type="project" value="UniProtKB"/>
</dbReference>
<dbReference type="GO" id="GO:0060916">
    <property type="term" value="P:mesenchymal cell proliferation involved in lung development"/>
    <property type="evidence" value="ECO:0000250"/>
    <property type="project" value="UniProtKB"/>
</dbReference>
<dbReference type="GO" id="GO:0008285">
    <property type="term" value="P:negative regulation of cell population proliferation"/>
    <property type="evidence" value="ECO:0000250"/>
    <property type="project" value="UniProtKB"/>
</dbReference>
<dbReference type="GO" id="GO:0072201">
    <property type="term" value="P:negative regulation of mesenchymal cell proliferation"/>
    <property type="evidence" value="ECO:0000250"/>
    <property type="project" value="UniProtKB"/>
</dbReference>
<dbReference type="GO" id="GO:2000791">
    <property type="term" value="P:negative regulation of mesenchymal cell proliferation involved in lung development"/>
    <property type="evidence" value="ECO:0000250"/>
    <property type="project" value="UniProtKB"/>
</dbReference>
<dbReference type="GO" id="GO:2000584">
    <property type="term" value="P:negative regulation of platelet-derived growth factor receptor-alpha signaling pathway"/>
    <property type="evidence" value="ECO:0000250"/>
    <property type="project" value="UniProtKB"/>
</dbReference>
<dbReference type="GO" id="GO:0000122">
    <property type="term" value="P:negative regulation of transcription by RNA polymerase II"/>
    <property type="evidence" value="ECO:0000250"/>
    <property type="project" value="UniProtKB"/>
</dbReference>
<dbReference type="GO" id="GO:0006357">
    <property type="term" value="P:regulation of transcription by RNA polymerase II"/>
    <property type="evidence" value="ECO:0000318"/>
    <property type="project" value="GO_Central"/>
</dbReference>
<dbReference type="CDD" id="cd15674">
    <property type="entry name" value="ePHD_PHF14"/>
    <property type="match status" value="1"/>
</dbReference>
<dbReference type="CDD" id="cd15561">
    <property type="entry name" value="PHD1_PHF14"/>
    <property type="match status" value="1"/>
</dbReference>
<dbReference type="CDD" id="cd15562">
    <property type="entry name" value="PHD2_PHF14"/>
    <property type="match status" value="1"/>
</dbReference>
<dbReference type="CDD" id="cd15563">
    <property type="entry name" value="PHD3_PHF14"/>
    <property type="match status" value="1"/>
</dbReference>
<dbReference type="FunFam" id="3.30.40.10:FF:000086">
    <property type="entry name" value="PHD finger protein 14 isoform X1"/>
    <property type="match status" value="1"/>
</dbReference>
<dbReference type="Gene3D" id="2.30.30.1150">
    <property type="match status" value="2"/>
</dbReference>
<dbReference type="Gene3D" id="3.30.40.10">
    <property type="entry name" value="Zinc/RING finger domain, C3HC4 (zinc finger)"/>
    <property type="match status" value="2"/>
</dbReference>
<dbReference type="InterPro" id="IPR034732">
    <property type="entry name" value="EPHD"/>
</dbReference>
<dbReference type="InterPro" id="IPR050701">
    <property type="entry name" value="Histone_Mod_Regulator"/>
</dbReference>
<dbReference type="InterPro" id="IPR019786">
    <property type="entry name" value="Zinc_finger_PHD-type_CS"/>
</dbReference>
<dbReference type="InterPro" id="IPR011011">
    <property type="entry name" value="Znf_FYVE_PHD"/>
</dbReference>
<dbReference type="InterPro" id="IPR001965">
    <property type="entry name" value="Znf_PHD"/>
</dbReference>
<dbReference type="InterPro" id="IPR019787">
    <property type="entry name" value="Znf_PHD-finger"/>
</dbReference>
<dbReference type="InterPro" id="IPR013083">
    <property type="entry name" value="Znf_RING/FYVE/PHD"/>
</dbReference>
<dbReference type="PANTHER" id="PTHR13793:SF150">
    <property type="entry name" value="PHD FINGER PROTEIN 14"/>
    <property type="match status" value="1"/>
</dbReference>
<dbReference type="PANTHER" id="PTHR13793">
    <property type="entry name" value="PHD FINGER PROTEINS"/>
    <property type="match status" value="1"/>
</dbReference>
<dbReference type="Pfam" id="PF00628">
    <property type="entry name" value="PHD"/>
    <property type="match status" value="2"/>
</dbReference>
<dbReference type="Pfam" id="PF13831">
    <property type="entry name" value="PHD_2"/>
    <property type="match status" value="1"/>
</dbReference>
<dbReference type="Pfam" id="PF13832">
    <property type="entry name" value="zf-HC5HC2H_2"/>
    <property type="match status" value="1"/>
</dbReference>
<dbReference type="SMART" id="SM00249">
    <property type="entry name" value="PHD"/>
    <property type="match status" value="4"/>
</dbReference>
<dbReference type="SUPFAM" id="SSF57903">
    <property type="entry name" value="FYVE/PHD zinc finger"/>
    <property type="match status" value="3"/>
</dbReference>
<dbReference type="PROSITE" id="PS51805">
    <property type="entry name" value="EPHD"/>
    <property type="match status" value="1"/>
</dbReference>
<dbReference type="PROSITE" id="PS01359">
    <property type="entry name" value="ZF_PHD_1"/>
    <property type="match status" value="3"/>
</dbReference>
<dbReference type="PROSITE" id="PS50016">
    <property type="entry name" value="ZF_PHD_2"/>
    <property type="match status" value="3"/>
</dbReference>
<comment type="function">
    <text evidence="1 6">Histone-binding protein (PubMed:34365506). Binds preferentially to unmodified histone H3 but can also bind to a lesser extent to histone H3 trimethylated at 'Lys-9' (H3K9me3) as well as to histone H3 monomethylated at 'Lys-27' (H3K27ac) and trimethylated at 'Lys-27' (H3K27me3) (PubMed:34365506). Represses PDGFRA expression, thus playing a role in regulation of mesenchymal cell proliferation (By similarity).</text>
</comment>
<comment type="subunit">
    <text evidence="6">Interacts with histone H3.</text>
</comment>
<comment type="subcellular location">
    <subcellularLocation>
        <location evidence="1">Nucleus</location>
    </subcellularLocation>
</comment>
<comment type="domain">
    <text evidence="6">The N-terminal region, including the PHD-type 1 and 2 zinc fingers and the C2HC pre-PHD-type zinc finger, is required for binding to histone H3.</text>
</comment>
<proteinExistence type="evidence at protein level"/>